<comment type="function">
    <text evidence="1">Component of the acetyl coenzyme A carboxylase (ACC) complex. First, biotin carboxylase catalyzes the carboxylation of biotin on its carrier protein (BCCP) and then the CO(2) group is transferred by the carboxyltransferase to acetyl-CoA to form malonyl-CoA.</text>
</comment>
<comment type="catalytic activity">
    <reaction evidence="1">
        <text>N(6)-carboxybiotinyl-L-lysyl-[protein] + acetyl-CoA = N(6)-biotinyl-L-lysyl-[protein] + malonyl-CoA</text>
        <dbReference type="Rhea" id="RHEA:54728"/>
        <dbReference type="Rhea" id="RHEA-COMP:10505"/>
        <dbReference type="Rhea" id="RHEA-COMP:10506"/>
        <dbReference type="ChEBI" id="CHEBI:57288"/>
        <dbReference type="ChEBI" id="CHEBI:57384"/>
        <dbReference type="ChEBI" id="CHEBI:83144"/>
        <dbReference type="ChEBI" id="CHEBI:83145"/>
        <dbReference type="EC" id="2.1.3.15"/>
    </reaction>
</comment>
<comment type="pathway">
    <text evidence="1">Lipid metabolism; malonyl-CoA biosynthesis; malonyl-CoA from acetyl-CoA: step 1/1.</text>
</comment>
<comment type="subunit">
    <text evidence="1">Acetyl-CoA carboxylase is a heterohexamer composed of biotin carboxyl carrier protein (AccB), biotin carboxylase (AccC) and two subunits each of ACCase subunit alpha (AccA) and ACCase subunit beta (AccD).</text>
</comment>
<comment type="subcellular location">
    <subcellularLocation>
        <location evidence="1">Cytoplasm</location>
    </subcellularLocation>
</comment>
<comment type="similarity">
    <text evidence="1">Belongs to the AccA family.</text>
</comment>
<reference key="1">
    <citation type="journal article" date="2009" name="BMC Genomics">
        <title>Pseudogene accumulation in the evolutionary histories of Salmonella enterica serovars Paratyphi A and Typhi.</title>
        <authorList>
            <person name="Holt K.E."/>
            <person name="Thomson N.R."/>
            <person name="Wain J."/>
            <person name="Langridge G.C."/>
            <person name="Hasan R."/>
            <person name="Bhutta Z.A."/>
            <person name="Quail M.A."/>
            <person name="Norbertczak H."/>
            <person name="Walker D."/>
            <person name="Simmonds M."/>
            <person name="White B."/>
            <person name="Bason N."/>
            <person name="Mungall K."/>
            <person name="Dougan G."/>
            <person name="Parkhill J."/>
        </authorList>
    </citation>
    <scope>NUCLEOTIDE SEQUENCE [LARGE SCALE GENOMIC DNA]</scope>
    <source>
        <strain>AKU_12601</strain>
    </source>
</reference>
<protein>
    <recommendedName>
        <fullName evidence="1">Acetyl-coenzyme A carboxylase carboxyl transferase subunit alpha</fullName>
        <shortName evidence="1">ACCase subunit alpha</shortName>
        <shortName evidence="1">Acetyl-CoA carboxylase carboxyltransferase subunit alpha</shortName>
        <ecNumber evidence="1">2.1.3.15</ecNumber>
    </recommendedName>
</protein>
<keyword id="KW-0067">ATP-binding</keyword>
<keyword id="KW-0963">Cytoplasm</keyword>
<keyword id="KW-0275">Fatty acid biosynthesis</keyword>
<keyword id="KW-0276">Fatty acid metabolism</keyword>
<keyword id="KW-0444">Lipid biosynthesis</keyword>
<keyword id="KW-0443">Lipid metabolism</keyword>
<keyword id="KW-0547">Nucleotide-binding</keyword>
<keyword id="KW-0808">Transferase</keyword>
<organism>
    <name type="scientific">Salmonella paratyphi A (strain AKU_12601)</name>
    <dbReference type="NCBI Taxonomy" id="554290"/>
    <lineage>
        <taxon>Bacteria</taxon>
        <taxon>Pseudomonadati</taxon>
        <taxon>Pseudomonadota</taxon>
        <taxon>Gammaproteobacteria</taxon>
        <taxon>Enterobacterales</taxon>
        <taxon>Enterobacteriaceae</taxon>
        <taxon>Salmonella</taxon>
    </lineage>
</organism>
<name>ACCA_SALPK</name>
<dbReference type="EC" id="2.1.3.15" evidence="1"/>
<dbReference type="EMBL" id="FM200053">
    <property type="protein sequence ID" value="CAR58345.1"/>
    <property type="molecule type" value="Genomic_DNA"/>
</dbReference>
<dbReference type="RefSeq" id="WP_000055753.1">
    <property type="nucleotide sequence ID" value="NC_011147.1"/>
</dbReference>
<dbReference type="SMR" id="B5BAP2"/>
<dbReference type="KEGG" id="sek:SSPA0231"/>
<dbReference type="HOGENOM" id="CLU_015486_0_2_6"/>
<dbReference type="UniPathway" id="UPA00655">
    <property type="reaction ID" value="UER00711"/>
</dbReference>
<dbReference type="Proteomes" id="UP000001869">
    <property type="component" value="Chromosome"/>
</dbReference>
<dbReference type="GO" id="GO:0009317">
    <property type="term" value="C:acetyl-CoA carboxylase complex"/>
    <property type="evidence" value="ECO:0007669"/>
    <property type="project" value="InterPro"/>
</dbReference>
<dbReference type="GO" id="GO:0003989">
    <property type="term" value="F:acetyl-CoA carboxylase activity"/>
    <property type="evidence" value="ECO:0007669"/>
    <property type="project" value="InterPro"/>
</dbReference>
<dbReference type="GO" id="GO:0005524">
    <property type="term" value="F:ATP binding"/>
    <property type="evidence" value="ECO:0007669"/>
    <property type="project" value="UniProtKB-KW"/>
</dbReference>
<dbReference type="GO" id="GO:0016743">
    <property type="term" value="F:carboxyl- or carbamoyltransferase activity"/>
    <property type="evidence" value="ECO:0007669"/>
    <property type="project" value="UniProtKB-UniRule"/>
</dbReference>
<dbReference type="GO" id="GO:0006633">
    <property type="term" value="P:fatty acid biosynthetic process"/>
    <property type="evidence" value="ECO:0007669"/>
    <property type="project" value="UniProtKB-KW"/>
</dbReference>
<dbReference type="GO" id="GO:2001295">
    <property type="term" value="P:malonyl-CoA biosynthetic process"/>
    <property type="evidence" value="ECO:0007669"/>
    <property type="project" value="UniProtKB-UniRule"/>
</dbReference>
<dbReference type="FunFam" id="3.90.226.10:FF:000008">
    <property type="entry name" value="Acetyl-coenzyme A carboxylase carboxyl transferase subunit alpha"/>
    <property type="match status" value="1"/>
</dbReference>
<dbReference type="Gene3D" id="3.90.226.10">
    <property type="entry name" value="2-enoyl-CoA Hydratase, Chain A, domain 1"/>
    <property type="match status" value="1"/>
</dbReference>
<dbReference type="HAMAP" id="MF_00823">
    <property type="entry name" value="AcetylCoA_CT_alpha"/>
    <property type="match status" value="1"/>
</dbReference>
<dbReference type="InterPro" id="IPR001095">
    <property type="entry name" value="Acetyl_CoA_COase_a_su"/>
</dbReference>
<dbReference type="InterPro" id="IPR029045">
    <property type="entry name" value="ClpP/crotonase-like_dom_sf"/>
</dbReference>
<dbReference type="InterPro" id="IPR011763">
    <property type="entry name" value="COA_CT_C"/>
</dbReference>
<dbReference type="NCBIfam" id="TIGR00513">
    <property type="entry name" value="accA"/>
    <property type="match status" value="1"/>
</dbReference>
<dbReference type="NCBIfam" id="NF041504">
    <property type="entry name" value="AccA_sub"/>
    <property type="match status" value="1"/>
</dbReference>
<dbReference type="NCBIfam" id="NF004344">
    <property type="entry name" value="PRK05724.1"/>
    <property type="match status" value="1"/>
</dbReference>
<dbReference type="PANTHER" id="PTHR42853">
    <property type="entry name" value="ACETYL-COENZYME A CARBOXYLASE CARBOXYL TRANSFERASE SUBUNIT ALPHA"/>
    <property type="match status" value="1"/>
</dbReference>
<dbReference type="PANTHER" id="PTHR42853:SF3">
    <property type="entry name" value="ACETYL-COENZYME A CARBOXYLASE CARBOXYL TRANSFERASE SUBUNIT ALPHA, CHLOROPLASTIC"/>
    <property type="match status" value="1"/>
</dbReference>
<dbReference type="Pfam" id="PF03255">
    <property type="entry name" value="ACCA"/>
    <property type="match status" value="1"/>
</dbReference>
<dbReference type="PRINTS" id="PR01069">
    <property type="entry name" value="ACCCTRFRASEA"/>
</dbReference>
<dbReference type="SUPFAM" id="SSF52096">
    <property type="entry name" value="ClpP/crotonase"/>
    <property type="match status" value="1"/>
</dbReference>
<dbReference type="PROSITE" id="PS50989">
    <property type="entry name" value="COA_CT_CTER"/>
    <property type="match status" value="1"/>
</dbReference>
<gene>
    <name evidence="1" type="primary">accA</name>
    <name type="ordered locus">SSPA0231</name>
</gene>
<feature type="chain" id="PRO_1000134520" description="Acetyl-coenzyme A carboxylase carboxyl transferase subunit alpha">
    <location>
        <begin position="1"/>
        <end position="319"/>
    </location>
</feature>
<feature type="domain" description="CoA carboxyltransferase C-terminal" evidence="2">
    <location>
        <begin position="35"/>
        <end position="296"/>
    </location>
</feature>
<evidence type="ECO:0000255" key="1">
    <source>
        <dbReference type="HAMAP-Rule" id="MF_00823"/>
    </source>
</evidence>
<evidence type="ECO:0000255" key="2">
    <source>
        <dbReference type="PROSITE-ProRule" id="PRU01137"/>
    </source>
</evidence>
<sequence length="319" mass="35344">MSLNFLDFEQPIAELEAKIDSLTAVSRQDEKLDINIDEEVHRLREKSVELTRKIFADLGAWQVAQLARHPQRPYTLDYVRLAFDEFDELAGDRAYADDKAIVGGIARLEGRPVMIIGHQKGRETKEKIRRNFGMPAPEGYRKALRLMEMAERFNMPIITFIDTPGAYPGVGAEERGQSEAIARNLREMSRLNVPVICTVIGEGGSGGALAIGVGDKVNMLQYSTYSVISPEGCASILWKSADKAPLAAEAMGIIAPRLKELKLIDSIIPEPLGGAHRNPEAMAASLKAQLLEDLADLDVLSTDDLKNRRYQRLMSYGYA</sequence>
<proteinExistence type="inferred from homology"/>
<accession>B5BAP2</accession>